<evidence type="ECO:0000255" key="1">
    <source>
        <dbReference type="HAMAP-Rule" id="MF_00303"/>
    </source>
</evidence>
<name>TIG_CHLAB</name>
<comment type="function">
    <text evidence="1">Involved in protein export. Acts as a chaperone by maintaining the newly synthesized protein in an open conformation. Functions as a peptidyl-prolyl cis-trans isomerase.</text>
</comment>
<comment type="catalytic activity">
    <reaction evidence="1">
        <text>[protein]-peptidylproline (omega=180) = [protein]-peptidylproline (omega=0)</text>
        <dbReference type="Rhea" id="RHEA:16237"/>
        <dbReference type="Rhea" id="RHEA-COMP:10747"/>
        <dbReference type="Rhea" id="RHEA-COMP:10748"/>
        <dbReference type="ChEBI" id="CHEBI:83833"/>
        <dbReference type="ChEBI" id="CHEBI:83834"/>
        <dbReference type="EC" id="5.2.1.8"/>
    </reaction>
</comment>
<comment type="subcellular location">
    <subcellularLocation>
        <location>Cytoplasm</location>
    </subcellularLocation>
    <text evidence="1">About half TF is bound to the ribosome near the polypeptide exit tunnel while the other half is free in the cytoplasm.</text>
</comment>
<comment type="domain">
    <text evidence="1">Consists of 3 domains; the N-terminus binds the ribosome, the middle domain has PPIase activity, while the C-terminus has intrinsic chaperone activity on its own.</text>
</comment>
<comment type="similarity">
    <text evidence="1">Belongs to the FKBP-type PPIase family. Tig subfamily.</text>
</comment>
<proteinExistence type="inferred from homology"/>
<organism>
    <name type="scientific">Chlamydia abortus (strain DSM 27085 / S26/3)</name>
    <name type="common">Chlamydophila abortus</name>
    <dbReference type="NCBI Taxonomy" id="218497"/>
    <lineage>
        <taxon>Bacteria</taxon>
        <taxon>Pseudomonadati</taxon>
        <taxon>Chlamydiota</taxon>
        <taxon>Chlamydiia</taxon>
        <taxon>Chlamydiales</taxon>
        <taxon>Chlamydiaceae</taxon>
        <taxon>Chlamydia/Chlamydophila group</taxon>
        <taxon>Chlamydia</taxon>
    </lineage>
</organism>
<gene>
    <name evidence="1" type="primary">tig</name>
    <name type="ordered locus">CAB887</name>
</gene>
<keyword id="KW-0131">Cell cycle</keyword>
<keyword id="KW-0132">Cell division</keyword>
<keyword id="KW-0143">Chaperone</keyword>
<keyword id="KW-0963">Cytoplasm</keyword>
<keyword id="KW-0413">Isomerase</keyword>
<keyword id="KW-0697">Rotamase</keyword>
<sequence length="441" mass="49748">MSRNFSNEQFSVNLEEQPGCVVSAEVKTTPQLLDKLHKQAIKKIKKDVILPGFRKGKAPDGIIVSRYPSQVTKELNQLLIQSAYQALASVGDRRPLSPQAIKSTSVTKADINEGGQVNFTYEAFPTISDIPWDKLSLSEEPAVKDITDEEMEKGLQNISYFFATKTPVTRTSQEGDFISLSLHVSKQNEEGVPTPIFENKYFKLCEEEMTDAFKTKFLGISAGHRVTEIIASPEIQSFLNGDVLTFTVNAVIEVVAPELDDDKARQLQAESLEDLKKKLRIQLENQAKDRQHQQCFAEAENALASIIDFDLPTSMLEDRLAMLTRAKLLNARLIQYCSDEELENKKSDLLKEAELEAKKTLKLFFLANKIFNDEKLVISREELQYMMDVCSRERYGMQPPRDISKEALQELVMAARDRLTYHKAMEKVLAKAKESATAPSA</sequence>
<dbReference type="EC" id="5.2.1.8" evidence="1"/>
<dbReference type="EMBL" id="CR848038">
    <property type="protein sequence ID" value="CAH64327.1"/>
    <property type="molecule type" value="Genomic_DNA"/>
</dbReference>
<dbReference type="RefSeq" id="WP_011097402.1">
    <property type="nucleotide sequence ID" value="NC_004552.2"/>
</dbReference>
<dbReference type="SMR" id="Q5L4W8"/>
<dbReference type="KEGG" id="cab:CAB887"/>
<dbReference type="eggNOG" id="COG0544">
    <property type="taxonomic scope" value="Bacteria"/>
</dbReference>
<dbReference type="HOGENOM" id="CLU_065756_0_0_0"/>
<dbReference type="OrthoDB" id="9767721at2"/>
<dbReference type="Proteomes" id="UP000001012">
    <property type="component" value="Chromosome"/>
</dbReference>
<dbReference type="GO" id="GO:0005737">
    <property type="term" value="C:cytoplasm"/>
    <property type="evidence" value="ECO:0007669"/>
    <property type="project" value="UniProtKB-SubCell"/>
</dbReference>
<dbReference type="GO" id="GO:0003755">
    <property type="term" value="F:peptidyl-prolyl cis-trans isomerase activity"/>
    <property type="evidence" value="ECO:0007669"/>
    <property type="project" value="UniProtKB-UniRule"/>
</dbReference>
<dbReference type="GO" id="GO:0051301">
    <property type="term" value="P:cell division"/>
    <property type="evidence" value="ECO:0007669"/>
    <property type="project" value="UniProtKB-KW"/>
</dbReference>
<dbReference type="GO" id="GO:0006457">
    <property type="term" value="P:protein folding"/>
    <property type="evidence" value="ECO:0007669"/>
    <property type="project" value="UniProtKB-UniRule"/>
</dbReference>
<dbReference type="GO" id="GO:0015031">
    <property type="term" value="P:protein transport"/>
    <property type="evidence" value="ECO:0007669"/>
    <property type="project" value="UniProtKB-UniRule"/>
</dbReference>
<dbReference type="Gene3D" id="3.10.50.40">
    <property type="match status" value="1"/>
</dbReference>
<dbReference type="Gene3D" id="3.30.70.1050">
    <property type="entry name" value="Trigger factor ribosome-binding domain"/>
    <property type="match status" value="1"/>
</dbReference>
<dbReference type="Gene3D" id="1.10.3120.10">
    <property type="entry name" value="Trigger factor, C-terminal domain"/>
    <property type="match status" value="1"/>
</dbReference>
<dbReference type="HAMAP" id="MF_00303">
    <property type="entry name" value="Trigger_factor_Tig"/>
    <property type="match status" value="1"/>
</dbReference>
<dbReference type="InterPro" id="IPR046357">
    <property type="entry name" value="PPIase_dom_sf"/>
</dbReference>
<dbReference type="InterPro" id="IPR005215">
    <property type="entry name" value="Trig_fac"/>
</dbReference>
<dbReference type="InterPro" id="IPR008880">
    <property type="entry name" value="Trigger_fac_C"/>
</dbReference>
<dbReference type="InterPro" id="IPR037041">
    <property type="entry name" value="Trigger_fac_C_sf"/>
</dbReference>
<dbReference type="InterPro" id="IPR008881">
    <property type="entry name" value="Trigger_fac_ribosome-bd_bac"/>
</dbReference>
<dbReference type="InterPro" id="IPR036611">
    <property type="entry name" value="Trigger_fac_ribosome-bd_sf"/>
</dbReference>
<dbReference type="InterPro" id="IPR027304">
    <property type="entry name" value="Trigger_fact/SurA_dom_sf"/>
</dbReference>
<dbReference type="NCBIfam" id="TIGR00115">
    <property type="entry name" value="tig"/>
    <property type="match status" value="1"/>
</dbReference>
<dbReference type="Pfam" id="PF05698">
    <property type="entry name" value="Trigger_C"/>
    <property type="match status" value="1"/>
</dbReference>
<dbReference type="Pfam" id="PF05697">
    <property type="entry name" value="Trigger_N"/>
    <property type="match status" value="1"/>
</dbReference>
<dbReference type="PIRSF" id="PIRSF003095">
    <property type="entry name" value="Trigger_factor"/>
    <property type="match status" value="1"/>
</dbReference>
<dbReference type="SUPFAM" id="SSF54534">
    <property type="entry name" value="FKBP-like"/>
    <property type="match status" value="1"/>
</dbReference>
<dbReference type="SUPFAM" id="SSF109998">
    <property type="entry name" value="Triger factor/SurA peptide-binding domain-like"/>
    <property type="match status" value="1"/>
</dbReference>
<dbReference type="SUPFAM" id="SSF102735">
    <property type="entry name" value="Trigger factor ribosome-binding domain"/>
    <property type="match status" value="1"/>
</dbReference>
<reference key="1">
    <citation type="journal article" date="2005" name="Genome Res.">
        <title>The Chlamydophila abortus genome sequence reveals an array of variable proteins that contribute to interspecies variation.</title>
        <authorList>
            <person name="Thomson N.R."/>
            <person name="Yeats C."/>
            <person name="Bell K."/>
            <person name="Holden M.T.G."/>
            <person name="Bentley S.D."/>
            <person name="Livingstone M."/>
            <person name="Cerdeno-Tarraga A.-M."/>
            <person name="Harris B."/>
            <person name="Doggett J."/>
            <person name="Ormond D."/>
            <person name="Mungall K."/>
            <person name="Clarke K."/>
            <person name="Feltwell T."/>
            <person name="Hance Z."/>
            <person name="Sanders M."/>
            <person name="Quail M.A."/>
            <person name="Price C."/>
            <person name="Barrell B.G."/>
            <person name="Parkhill J."/>
            <person name="Longbottom D."/>
        </authorList>
    </citation>
    <scope>NUCLEOTIDE SEQUENCE [LARGE SCALE GENOMIC DNA]</scope>
    <source>
        <strain>DSM 27085 / S26/3</strain>
    </source>
</reference>
<feature type="chain" id="PRO_0000256541" description="Trigger factor">
    <location>
        <begin position="1"/>
        <end position="441"/>
    </location>
</feature>
<feature type="domain" description="PPIase FKBP-type" evidence="1">
    <location>
        <begin position="175"/>
        <end position="257"/>
    </location>
</feature>
<accession>Q5L4W8</accession>
<protein>
    <recommendedName>
        <fullName evidence="1">Trigger factor</fullName>
        <shortName evidence="1">TF</shortName>
        <ecNumber evidence="1">5.2.1.8</ecNumber>
    </recommendedName>
    <alternativeName>
        <fullName evidence="1">PPIase</fullName>
    </alternativeName>
</protein>